<name>Y057_METKA</name>
<feature type="chain" id="PRO_0000149234" description="UPF0215 protein MK0057">
    <location>
        <begin position="1"/>
        <end position="197"/>
    </location>
</feature>
<dbReference type="EMBL" id="AE009439">
    <property type="protein sequence ID" value="AAM01274.1"/>
    <property type="molecule type" value="Genomic_DNA"/>
</dbReference>
<dbReference type="RefSeq" id="WP_011018429.1">
    <property type="nucleotide sequence ID" value="NC_003551.1"/>
</dbReference>
<dbReference type="SMR" id="Q8TZ82"/>
<dbReference type="STRING" id="190192.MK0057"/>
<dbReference type="PaxDb" id="190192-MK0057"/>
<dbReference type="EnsemblBacteria" id="AAM01274">
    <property type="protein sequence ID" value="AAM01274"/>
    <property type="gene ID" value="MK0057"/>
</dbReference>
<dbReference type="GeneID" id="1477360"/>
<dbReference type="KEGG" id="mka:MK0057"/>
<dbReference type="PATRIC" id="fig|190192.8.peg.58"/>
<dbReference type="HOGENOM" id="CLU_095956_1_0_2"/>
<dbReference type="InParanoid" id="Q8TZ82"/>
<dbReference type="OrthoDB" id="15207at2157"/>
<dbReference type="Proteomes" id="UP000001826">
    <property type="component" value="Chromosome"/>
</dbReference>
<dbReference type="Gene3D" id="3.30.2170.10">
    <property type="entry name" value="archaeoglobus fulgidus dsm 4304 superfamily"/>
    <property type="match status" value="1"/>
</dbReference>
<dbReference type="HAMAP" id="MF_00582">
    <property type="entry name" value="UPF0215"/>
    <property type="match status" value="1"/>
</dbReference>
<dbReference type="InterPro" id="IPR002802">
    <property type="entry name" value="Endo_dU"/>
</dbReference>
<dbReference type="NCBIfam" id="NF001977">
    <property type="entry name" value="PRK00766.1"/>
    <property type="match status" value="1"/>
</dbReference>
<dbReference type="PANTHER" id="PTHR39518">
    <property type="entry name" value="UPF0215 PROTEIN MJ1150"/>
    <property type="match status" value="1"/>
</dbReference>
<dbReference type="PANTHER" id="PTHR39518:SF2">
    <property type="entry name" value="UPF0215 PROTEIN MJ1150"/>
    <property type="match status" value="1"/>
</dbReference>
<dbReference type="Pfam" id="PF01949">
    <property type="entry name" value="DUF99"/>
    <property type="match status" value="1"/>
</dbReference>
<dbReference type="PIRSF" id="PIRSF006380">
    <property type="entry name" value="UCP006380"/>
    <property type="match status" value="1"/>
</dbReference>
<protein>
    <recommendedName>
        <fullName evidence="1">UPF0215 protein MK0057</fullName>
    </recommendedName>
</protein>
<comment type="similarity">
    <text evidence="1">Belongs to the UPF0215 family.</text>
</comment>
<proteinExistence type="inferred from homology"/>
<keyword id="KW-1185">Reference proteome</keyword>
<gene>
    <name type="ordered locus">MK0057</name>
</gene>
<reference key="1">
    <citation type="journal article" date="2002" name="Proc. Natl. Acad. Sci. U.S.A.">
        <title>The complete genome of hyperthermophile Methanopyrus kandleri AV19 and monophyly of archaeal methanogens.</title>
        <authorList>
            <person name="Slesarev A.I."/>
            <person name="Mezhevaya K.V."/>
            <person name="Makarova K.S."/>
            <person name="Polushin N.N."/>
            <person name="Shcherbinina O.V."/>
            <person name="Shakhova V.V."/>
            <person name="Belova G.I."/>
            <person name="Aravind L."/>
            <person name="Natale D.A."/>
            <person name="Rogozin I.B."/>
            <person name="Tatusov R.L."/>
            <person name="Wolf Y.I."/>
            <person name="Stetter K.O."/>
            <person name="Malykh A.G."/>
            <person name="Koonin E.V."/>
            <person name="Kozyavkin S.A."/>
        </authorList>
    </citation>
    <scope>NUCLEOTIDE SEQUENCE [LARGE SCALE GENOMIC DNA]</scope>
    <source>
        <strain>AV19 / DSM 6324 / JCM 9639 / NBRC 100938</strain>
    </source>
</reference>
<organism>
    <name type="scientific">Methanopyrus kandleri (strain AV19 / DSM 6324 / JCM 9639 / NBRC 100938)</name>
    <dbReference type="NCBI Taxonomy" id="190192"/>
    <lineage>
        <taxon>Archaea</taxon>
        <taxon>Methanobacteriati</taxon>
        <taxon>Methanobacteriota</taxon>
        <taxon>Methanomada group</taxon>
        <taxon>Methanopyri</taxon>
        <taxon>Methanopyrales</taxon>
        <taxon>Methanopyraceae</taxon>
        <taxon>Methanopyrus</taxon>
    </lineage>
</organism>
<sequence>MKLREVKPEIRVLGIDDGYYGPEDDRALVVGVVMRGGQWIDGVMSTEVTVDGLDVTDRIAEMVNRSKHRPQLRVILTDGITFAGFNVLDIKKLHEETGLPVISVIKRRPDVASVVSALSNLDRTEERRKIVLRAGPVHSVKTRRDEPPVYFQCAGVEPDVARVVLKRTATRHRLPEPIRVAHFIATGVTKGESSSDA</sequence>
<accession>Q8TZ82</accession>
<evidence type="ECO:0000255" key="1">
    <source>
        <dbReference type="HAMAP-Rule" id="MF_00582"/>
    </source>
</evidence>